<gene>
    <name evidence="1" type="primary">rutF</name>
    <name type="ordered locus">ECO26_1245</name>
</gene>
<evidence type="ECO:0000255" key="1">
    <source>
        <dbReference type="HAMAP-Rule" id="MF_00833"/>
    </source>
</evidence>
<reference key="1">
    <citation type="journal article" date="2009" name="Proc. Natl. Acad. Sci. U.S.A.">
        <title>Comparative genomics reveal the mechanism of the parallel evolution of O157 and non-O157 enterohemorrhagic Escherichia coli.</title>
        <authorList>
            <person name="Ogura Y."/>
            <person name="Ooka T."/>
            <person name="Iguchi A."/>
            <person name="Toh H."/>
            <person name="Asadulghani M."/>
            <person name="Oshima K."/>
            <person name="Kodama T."/>
            <person name="Abe H."/>
            <person name="Nakayama K."/>
            <person name="Kurokawa K."/>
            <person name="Tobe T."/>
            <person name="Hattori M."/>
            <person name="Hayashi T."/>
        </authorList>
    </citation>
    <scope>NUCLEOTIDE SEQUENCE [LARGE SCALE GENOMIC DNA]</scope>
    <source>
        <strain>11368 / EHEC</strain>
    </source>
</reference>
<proteinExistence type="inferred from homology"/>
<dbReference type="EC" id="1.5.1.42" evidence="1"/>
<dbReference type="EMBL" id="AP010953">
    <property type="protein sequence ID" value="BAI24557.1"/>
    <property type="molecule type" value="Genomic_DNA"/>
</dbReference>
<dbReference type="RefSeq" id="WP_001028095.1">
    <property type="nucleotide sequence ID" value="NC_013361.1"/>
</dbReference>
<dbReference type="SMR" id="C8TNB7"/>
<dbReference type="GeneID" id="75171083"/>
<dbReference type="KEGG" id="eoj:ECO26_1245"/>
<dbReference type="HOGENOM" id="CLU_059021_2_2_6"/>
<dbReference type="GO" id="GO:0010181">
    <property type="term" value="F:FMN binding"/>
    <property type="evidence" value="ECO:0007669"/>
    <property type="project" value="InterPro"/>
</dbReference>
<dbReference type="GO" id="GO:0052874">
    <property type="term" value="F:FMN reductase (NADH) activity"/>
    <property type="evidence" value="ECO:0007669"/>
    <property type="project" value="UniProtKB-EC"/>
</dbReference>
<dbReference type="GO" id="GO:0008752">
    <property type="term" value="F:FMN reductase [NAD(P)H] activity"/>
    <property type="evidence" value="ECO:0007669"/>
    <property type="project" value="InterPro"/>
</dbReference>
<dbReference type="GO" id="GO:0042602">
    <property type="term" value="F:riboflavin reductase (NADPH) activity"/>
    <property type="evidence" value="ECO:0007669"/>
    <property type="project" value="UniProtKB-UniRule"/>
</dbReference>
<dbReference type="GO" id="GO:0019740">
    <property type="term" value="P:nitrogen utilization"/>
    <property type="evidence" value="ECO:0007669"/>
    <property type="project" value="UniProtKB-UniRule"/>
</dbReference>
<dbReference type="GO" id="GO:0006212">
    <property type="term" value="P:uracil catabolic process"/>
    <property type="evidence" value="ECO:0007669"/>
    <property type="project" value="UniProtKB-UniRule"/>
</dbReference>
<dbReference type="FunFam" id="2.30.110.10:FF:000002">
    <property type="entry name" value="FMN reductase (NADH) RutF"/>
    <property type="match status" value="1"/>
</dbReference>
<dbReference type="Gene3D" id="2.30.110.10">
    <property type="entry name" value="Electron Transport, Fmn-binding Protein, Chain A"/>
    <property type="match status" value="1"/>
</dbReference>
<dbReference type="HAMAP" id="MF_00833">
    <property type="entry name" value="RutF"/>
    <property type="match status" value="1"/>
</dbReference>
<dbReference type="InterPro" id="IPR002563">
    <property type="entry name" value="Flavin_Rdtase-like_dom"/>
</dbReference>
<dbReference type="InterPro" id="IPR050268">
    <property type="entry name" value="NADH-dep_flavin_reductase"/>
</dbReference>
<dbReference type="InterPro" id="IPR019917">
    <property type="entry name" value="RutF"/>
</dbReference>
<dbReference type="InterPro" id="IPR012349">
    <property type="entry name" value="Split_barrel_FMN-bd"/>
</dbReference>
<dbReference type="NCBIfam" id="TIGR03615">
    <property type="entry name" value="RutF"/>
    <property type="match status" value="1"/>
</dbReference>
<dbReference type="PANTHER" id="PTHR30466">
    <property type="entry name" value="FLAVIN REDUCTASE"/>
    <property type="match status" value="1"/>
</dbReference>
<dbReference type="PANTHER" id="PTHR30466:SF1">
    <property type="entry name" value="FMN REDUCTASE (NADH) RUTF"/>
    <property type="match status" value="1"/>
</dbReference>
<dbReference type="Pfam" id="PF01613">
    <property type="entry name" value="Flavin_Reduct"/>
    <property type="match status" value="1"/>
</dbReference>
<dbReference type="SMART" id="SM00903">
    <property type="entry name" value="Flavin_Reduct"/>
    <property type="match status" value="1"/>
</dbReference>
<dbReference type="SUPFAM" id="SSF50475">
    <property type="entry name" value="FMN-binding split barrel"/>
    <property type="match status" value="1"/>
</dbReference>
<organism>
    <name type="scientific">Escherichia coli O26:H11 (strain 11368 / EHEC)</name>
    <dbReference type="NCBI Taxonomy" id="573235"/>
    <lineage>
        <taxon>Bacteria</taxon>
        <taxon>Pseudomonadati</taxon>
        <taxon>Pseudomonadota</taxon>
        <taxon>Gammaproteobacteria</taxon>
        <taxon>Enterobacterales</taxon>
        <taxon>Enterobacteriaceae</taxon>
        <taxon>Escherichia</taxon>
    </lineage>
</organism>
<feature type="chain" id="PRO_0000403018" description="FMN reductase (NADH) RutF">
    <location>
        <begin position="1"/>
        <end position="164"/>
    </location>
</feature>
<name>RUTF_ECO26</name>
<sequence>MNIVDQQTFRDAMSCMGAAVNIITTDGPAGRAGFTASAVCSVTDTPPTLLVCLNRGASVWPVFNENRTLCVNTLSAGQEPLSNLFGGKTPMEHRFAAARWQTGVTGCPQLEEALVSFDCRISQVVSVGTHDILFCAIEAIHRHATPYGLVWFDRSYHALMRPAC</sequence>
<accession>C8TNB7</accession>
<protein>
    <recommendedName>
        <fullName evidence="1">FMN reductase (NADH) RutF</fullName>
        <ecNumber evidence="1">1.5.1.42</ecNumber>
    </recommendedName>
    <alternativeName>
        <fullName evidence="1">FMN reductase</fullName>
    </alternativeName>
    <alternativeName>
        <fullName evidence="1">NADH-flavin reductase RutF</fullName>
    </alternativeName>
    <alternativeName>
        <fullName evidence="1">NADH:flavin oxidoreductase</fullName>
    </alternativeName>
</protein>
<comment type="function">
    <text evidence="1">Catalyzes the reduction of FMN to FMNH2 which is used to reduce pyrimidine by RutA via the Rut pathway.</text>
</comment>
<comment type="catalytic activity">
    <reaction evidence="1">
        <text>FMNH2 + NAD(+) = FMN + NADH + 2 H(+)</text>
        <dbReference type="Rhea" id="RHEA:21620"/>
        <dbReference type="ChEBI" id="CHEBI:15378"/>
        <dbReference type="ChEBI" id="CHEBI:57540"/>
        <dbReference type="ChEBI" id="CHEBI:57618"/>
        <dbReference type="ChEBI" id="CHEBI:57945"/>
        <dbReference type="ChEBI" id="CHEBI:58210"/>
        <dbReference type="EC" id="1.5.1.42"/>
    </reaction>
</comment>
<comment type="induction">
    <text evidence="1">Up-regulated by the nitrogen regulatory protein C (NtrC also called GlnG) and repressed by RutR.</text>
</comment>
<comment type="similarity">
    <text evidence="1">Belongs to the non-flavoprotein flavin reductase family. RutF subfamily.</text>
</comment>
<keyword id="KW-0285">Flavoprotein</keyword>
<keyword id="KW-0288">FMN</keyword>
<keyword id="KW-0520">NAD</keyword>
<keyword id="KW-0560">Oxidoreductase</keyword>